<reference key="1">
    <citation type="journal article" date="1988" name="J. Bacteriol.">
        <title>Bacterial-type ferredoxin genes in the nitrogen fixation regions of the cyanobacterium Anabaena sp. strain PCC 7120 and Rhizobium meliloti.</title>
        <authorList>
            <person name="Mulligan M.E."/>
            <person name="Buikema W.J."/>
            <person name="Haselkorn R."/>
        </authorList>
    </citation>
    <scope>NUCLEOTIDE SEQUENCE [GENOMIC DNA]</scope>
</reference>
<reference key="2">
    <citation type="journal article" date="2001" name="DNA Res.">
        <title>Complete genomic sequence of the filamentous nitrogen-fixing cyanobacterium Anabaena sp. strain PCC 7120.</title>
        <authorList>
            <person name="Kaneko T."/>
            <person name="Nakamura Y."/>
            <person name="Wolk C.P."/>
            <person name="Kuritz T."/>
            <person name="Sasamoto S."/>
            <person name="Watanabe A."/>
            <person name="Iriguchi M."/>
            <person name="Ishikawa A."/>
            <person name="Kawashima K."/>
            <person name="Kimura T."/>
            <person name="Kishida Y."/>
            <person name="Kohara M."/>
            <person name="Matsumoto M."/>
            <person name="Matsuno A."/>
            <person name="Muraki A."/>
            <person name="Nakazaki N."/>
            <person name="Shimpo S."/>
            <person name="Sugimoto M."/>
            <person name="Takazawa M."/>
            <person name="Yamada M."/>
            <person name="Yasuda M."/>
            <person name="Tabata S."/>
        </authorList>
    </citation>
    <scope>NUCLEOTIDE SEQUENCE [LARGE SCALE GENOMIC DNA]</scope>
    <source>
        <strain>PCC 7120 / SAG 25.82 / UTEX 2576</strain>
    </source>
</reference>
<reference key="3">
    <citation type="journal article" date="1989" name="J. Biol. Chem.">
        <title>Nitrogen fixation (nif) genes of the cyanobacterium Anabaena species strain PCC 7120. The nifB-fdxN-nifS-nifU operon.</title>
        <authorList>
            <person name="Mulligan M.E."/>
            <person name="Haselkorn R."/>
        </authorList>
    </citation>
    <scope>NUCLEOTIDE SEQUENCE [GENOMIC DNA] OF 98-116</scope>
</reference>
<dbReference type="EMBL" id="J05111">
    <property type="protein sequence ID" value="AAA22005.1"/>
    <property type="molecule type" value="Genomic_DNA"/>
</dbReference>
<dbReference type="EMBL" id="BA000019">
    <property type="protein sequence ID" value="BAB77882.1"/>
    <property type="molecule type" value="Genomic_DNA"/>
</dbReference>
<dbReference type="PIR" id="A32361">
    <property type="entry name" value="FEAIN"/>
</dbReference>
<dbReference type="STRING" id="103690.gene:10493472"/>
<dbReference type="KEGG" id="ana:all1516"/>
<dbReference type="eggNOG" id="COG1145">
    <property type="taxonomic scope" value="Bacteria"/>
</dbReference>
<dbReference type="Proteomes" id="UP000002483">
    <property type="component" value="Chromosome"/>
</dbReference>
<dbReference type="GO" id="GO:0051539">
    <property type="term" value="F:4 iron, 4 sulfur cluster binding"/>
    <property type="evidence" value="ECO:0007669"/>
    <property type="project" value="UniProtKB-KW"/>
</dbReference>
<dbReference type="GO" id="GO:0046872">
    <property type="term" value="F:metal ion binding"/>
    <property type="evidence" value="ECO:0007669"/>
    <property type="project" value="UniProtKB-KW"/>
</dbReference>
<dbReference type="GO" id="GO:0009399">
    <property type="term" value="P:nitrogen fixation"/>
    <property type="evidence" value="ECO:0007669"/>
    <property type="project" value="UniProtKB-KW"/>
</dbReference>
<dbReference type="Gene3D" id="3.30.70.20">
    <property type="match status" value="1"/>
</dbReference>
<dbReference type="InterPro" id="IPR017896">
    <property type="entry name" value="4Fe4S_Fe-S-bd"/>
</dbReference>
<dbReference type="InterPro" id="IPR017900">
    <property type="entry name" value="4Fe4S_Fe_S_CS"/>
</dbReference>
<dbReference type="Pfam" id="PF00037">
    <property type="entry name" value="Fer4"/>
    <property type="match status" value="1"/>
</dbReference>
<dbReference type="SUPFAM" id="SSF54862">
    <property type="entry name" value="4Fe-4S ferredoxins"/>
    <property type="match status" value="1"/>
</dbReference>
<dbReference type="PROSITE" id="PS00198">
    <property type="entry name" value="4FE4S_FER_1"/>
    <property type="match status" value="1"/>
</dbReference>
<dbReference type="PROSITE" id="PS51379">
    <property type="entry name" value="4FE4S_FER_2"/>
    <property type="match status" value="1"/>
</dbReference>
<evidence type="ECO:0000250" key="1"/>
<evidence type="ECO:0000255" key="2">
    <source>
        <dbReference type="PROSITE-ProRule" id="PRU00711"/>
    </source>
</evidence>
<protein>
    <recommendedName>
        <fullName>Ferredoxin-like protein in nif region</fullName>
    </recommendedName>
</protein>
<accession>P12415</accession>
<feature type="chain" id="PRO_0000159163" description="Ferredoxin-like protein in nif region">
    <location>
        <begin position="1"/>
        <end position="116"/>
    </location>
</feature>
<feature type="domain" description="4Fe-4S ferredoxin-type" evidence="2">
    <location>
        <begin position="2"/>
        <end position="29"/>
    </location>
</feature>
<feature type="binding site" evidence="1">
    <location>
        <position position="9"/>
    </location>
    <ligand>
        <name>iron-sulfur cluster</name>
        <dbReference type="ChEBI" id="CHEBI:30408"/>
    </ligand>
</feature>
<feature type="binding site" evidence="1">
    <location>
        <position position="12"/>
    </location>
    <ligand>
        <name>iron-sulfur cluster</name>
        <dbReference type="ChEBI" id="CHEBI:30408"/>
    </ligand>
</feature>
<feature type="binding site" evidence="1">
    <location>
        <position position="15"/>
    </location>
    <ligand>
        <name>iron-sulfur cluster</name>
        <dbReference type="ChEBI" id="CHEBI:30408"/>
    </ligand>
</feature>
<feature type="binding site" evidence="1">
    <location>
        <position position="19"/>
    </location>
    <ligand>
        <name>iron-sulfur cluster</name>
        <dbReference type="ChEBI" id="CHEBI:30408"/>
    </ligand>
</feature>
<proteinExistence type="predicted"/>
<name>FDXN_NOSS1</name>
<gene>
    <name type="primary">fdxN</name>
    <name type="ordered locus">all1516</name>
</gene>
<keyword id="KW-0004">4Fe-4S</keyword>
<keyword id="KW-0249">Electron transport</keyword>
<keyword id="KW-0408">Iron</keyword>
<keyword id="KW-0411">Iron-sulfur</keyword>
<keyword id="KW-0479">Metal-binding</keyword>
<keyword id="KW-0535">Nitrogen fixation</keyword>
<keyword id="KW-1185">Reference proteome</keyword>
<keyword id="KW-0813">Transport</keyword>
<sequence length="116" mass="13192">MAYTITSQCISCKLCSSVCPTGAIKIAENGQHWIDSELCTNCVDTVYTVPQCKAGCPTCDGCVKVPSDYWEGWFANYNRVIAKLTKKQDYWERWFNCYSQKFSEQLQKHQGEILGV</sequence>
<organism>
    <name type="scientific">Nostoc sp. (strain PCC 7120 / SAG 25.82 / UTEX 2576)</name>
    <dbReference type="NCBI Taxonomy" id="103690"/>
    <lineage>
        <taxon>Bacteria</taxon>
        <taxon>Bacillati</taxon>
        <taxon>Cyanobacteriota</taxon>
        <taxon>Cyanophyceae</taxon>
        <taxon>Nostocales</taxon>
        <taxon>Nostocaceae</taxon>
        <taxon>Nostoc</taxon>
    </lineage>
</organism>